<name>RHMD_ECO45</name>
<protein>
    <recommendedName>
        <fullName evidence="1">L-rhamnonate dehydratase</fullName>
        <shortName evidence="1">RhamD</shortName>
        <ecNumber evidence="1">4.2.1.90</ecNumber>
    </recommendedName>
</protein>
<sequence>MENIMTLPKIKQVRAWFTGGAIAEKGAGGGDYHDQGANHWIDDHIATPMSKYRDYEQSRQSFGINVLGTLVVEVEAENGQTGFAVSTAGEMGCFIVEKHLNRFIEGKCVSDIKLIHDQMLNATLYYSGSGGLVMNTISCVDLALWDLFGKVVGLPVYKLLGGAVRDEIQFYATGARPDLAKEMGFIGGKMPTHWGPHDGDAGIRKDAAMVADMREKCGEDFWLMLDCWMSQDVNYATKLAHACAPYNLKWIEECLPPQQYEGYRELKHNAPAGMMVTSGEHHGTLQSFRTLSETGIDIMQPDVGWCGGLTTLVEIAAIAKSRGQLVVPHGSSVYSHHAVITFTNTPFSEFLMTSPDCSTMRPQFDPILLNEPVPVNGRIHKSVLDKPGFGVELNRDCNLKRPYSH</sequence>
<gene>
    <name evidence="1" type="primary">rhmD</name>
    <name type="ordered locus">ECS88_2396</name>
</gene>
<feature type="chain" id="PRO_1000140372" description="L-rhamnonate dehydratase">
    <location>
        <begin position="1"/>
        <end position="405"/>
    </location>
</feature>
<feature type="active site" description="Proton acceptor" evidence="1">
    <location>
        <position position="329"/>
    </location>
</feature>
<feature type="binding site" evidence="1">
    <location>
        <position position="33"/>
    </location>
    <ligand>
        <name>substrate</name>
    </ligand>
</feature>
<feature type="binding site" evidence="1">
    <location>
        <position position="59"/>
    </location>
    <ligand>
        <name>substrate</name>
    </ligand>
</feature>
<feature type="binding site" evidence="1">
    <location>
        <position position="226"/>
    </location>
    <ligand>
        <name>Mg(2+)</name>
        <dbReference type="ChEBI" id="CHEBI:18420"/>
    </ligand>
</feature>
<feature type="binding site" evidence="1">
    <location>
        <position position="252"/>
    </location>
    <ligand>
        <name>Mg(2+)</name>
        <dbReference type="ChEBI" id="CHEBI:18420"/>
    </ligand>
</feature>
<feature type="binding site" evidence="1">
    <location>
        <position position="280"/>
    </location>
    <ligand>
        <name>Mg(2+)</name>
        <dbReference type="ChEBI" id="CHEBI:18420"/>
    </ligand>
</feature>
<feature type="binding site" evidence="1">
    <location>
        <position position="349"/>
    </location>
    <ligand>
        <name>substrate</name>
    </ligand>
</feature>
<feature type="site" description="Increases basicity of active site His" evidence="1">
    <location>
        <position position="302"/>
    </location>
</feature>
<feature type="site" description="Transition state stabilizer" evidence="1">
    <location>
        <position position="349"/>
    </location>
</feature>
<proteinExistence type="inferred from homology"/>
<comment type="function">
    <text evidence="1">Catalyzes the dehydration of L-rhamnonate to 2-keto-3-deoxy-L-rhamnonate (KDR).</text>
</comment>
<comment type="catalytic activity">
    <reaction evidence="1">
        <text>L-rhamnonate = 2-dehydro-3-deoxy-L-rhamnonate + H2O</text>
        <dbReference type="Rhea" id="RHEA:23080"/>
        <dbReference type="ChEBI" id="CHEBI:15377"/>
        <dbReference type="ChEBI" id="CHEBI:58118"/>
        <dbReference type="ChEBI" id="CHEBI:58371"/>
        <dbReference type="EC" id="4.2.1.90"/>
    </reaction>
</comment>
<comment type="cofactor">
    <cofactor evidence="1">
        <name>Mg(2+)</name>
        <dbReference type="ChEBI" id="CHEBI:18420"/>
    </cofactor>
    <text evidence="1">Binds 1 Mg(2+) ion per subunit.</text>
</comment>
<comment type="subunit">
    <text evidence="1">Homooctamer; tetramer of dimers.</text>
</comment>
<comment type="miscellaneous">
    <text evidence="1">Reaction proceeds via a syn dehydration.</text>
</comment>
<comment type="similarity">
    <text evidence="1">Belongs to the mandelate racemase/muconate lactonizing enzyme family. RhamD subfamily.</text>
</comment>
<organism>
    <name type="scientific">Escherichia coli O45:K1 (strain S88 / ExPEC)</name>
    <dbReference type="NCBI Taxonomy" id="585035"/>
    <lineage>
        <taxon>Bacteria</taxon>
        <taxon>Pseudomonadati</taxon>
        <taxon>Pseudomonadota</taxon>
        <taxon>Gammaproteobacteria</taxon>
        <taxon>Enterobacterales</taxon>
        <taxon>Enterobacteriaceae</taxon>
        <taxon>Escherichia</taxon>
    </lineage>
</organism>
<evidence type="ECO:0000255" key="1">
    <source>
        <dbReference type="HAMAP-Rule" id="MF_01288"/>
    </source>
</evidence>
<keyword id="KW-0456">Lyase</keyword>
<keyword id="KW-0460">Magnesium</keyword>
<keyword id="KW-0479">Metal-binding</keyword>
<keyword id="KW-1185">Reference proteome</keyword>
<accession>B7MG14</accession>
<dbReference type="EC" id="4.2.1.90" evidence="1"/>
<dbReference type="EMBL" id="CU928161">
    <property type="protein sequence ID" value="CAR03676.1"/>
    <property type="molecule type" value="Genomic_DNA"/>
</dbReference>
<dbReference type="SMR" id="B7MG14"/>
<dbReference type="KEGG" id="ecz:ECS88_2396"/>
<dbReference type="HOGENOM" id="CLU_030273_1_0_6"/>
<dbReference type="Proteomes" id="UP000000747">
    <property type="component" value="Chromosome"/>
</dbReference>
<dbReference type="GO" id="GO:0050032">
    <property type="term" value="F:L-rhamnonate dehydratase activity"/>
    <property type="evidence" value="ECO:0007669"/>
    <property type="project" value="UniProtKB-UniRule"/>
</dbReference>
<dbReference type="GO" id="GO:0000287">
    <property type="term" value="F:magnesium ion binding"/>
    <property type="evidence" value="ECO:0007669"/>
    <property type="project" value="UniProtKB-UniRule"/>
</dbReference>
<dbReference type="GO" id="GO:0009063">
    <property type="term" value="P:amino acid catabolic process"/>
    <property type="evidence" value="ECO:0007669"/>
    <property type="project" value="InterPro"/>
</dbReference>
<dbReference type="GO" id="GO:0016052">
    <property type="term" value="P:carbohydrate catabolic process"/>
    <property type="evidence" value="ECO:0007669"/>
    <property type="project" value="TreeGrafter"/>
</dbReference>
<dbReference type="CDD" id="cd03327">
    <property type="entry name" value="MR_like_2"/>
    <property type="match status" value="1"/>
</dbReference>
<dbReference type="FunFam" id="3.30.390.10:FF:000007">
    <property type="entry name" value="L-rhamnonate dehydratase"/>
    <property type="match status" value="1"/>
</dbReference>
<dbReference type="FunFam" id="3.20.20.120:FF:000005">
    <property type="entry name" value="Putative L-rhamnonate dehydratase"/>
    <property type="match status" value="1"/>
</dbReference>
<dbReference type="Gene3D" id="3.20.20.120">
    <property type="entry name" value="Enolase-like C-terminal domain"/>
    <property type="match status" value="1"/>
</dbReference>
<dbReference type="Gene3D" id="3.30.390.10">
    <property type="entry name" value="Enolase-like, N-terminal domain"/>
    <property type="match status" value="1"/>
</dbReference>
<dbReference type="HAMAP" id="MF_01288">
    <property type="entry name" value="Rhamnon_dehydrat"/>
    <property type="match status" value="1"/>
</dbReference>
<dbReference type="InterPro" id="IPR036849">
    <property type="entry name" value="Enolase-like_C_sf"/>
</dbReference>
<dbReference type="InterPro" id="IPR029017">
    <property type="entry name" value="Enolase-like_N"/>
</dbReference>
<dbReference type="InterPro" id="IPR029065">
    <property type="entry name" value="Enolase_C-like"/>
</dbReference>
<dbReference type="InterPro" id="IPR023444">
    <property type="entry name" value="L-Rhamnon_dehydrat"/>
</dbReference>
<dbReference type="InterPro" id="IPR018110">
    <property type="entry name" value="Mandel_Rmase/mucon_lact_enz_CS"/>
</dbReference>
<dbReference type="InterPro" id="IPR013342">
    <property type="entry name" value="Mandelate_racemase_C"/>
</dbReference>
<dbReference type="InterPro" id="IPR013341">
    <property type="entry name" value="Mandelate_racemase_N_dom"/>
</dbReference>
<dbReference type="InterPro" id="IPR046945">
    <property type="entry name" value="RHMD-like"/>
</dbReference>
<dbReference type="NCBIfam" id="NF011968">
    <property type="entry name" value="PRK15440.1"/>
    <property type="match status" value="1"/>
</dbReference>
<dbReference type="PANTHER" id="PTHR13794">
    <property type="entry name" value="ENOLASE SUPERFAMILY, MANDELATE RACEMASE"/>
    <property type="match status" value="1"/>
</dbReference>
<dbReference type="PANTHER" id="PTHR13794:SF58">
    <property type="entry name" value="MITOCHONDRIAL ENOLASE SUPERFAMILY MEMBER 1"/>
    <property type="match status" value="1"/>
</dbReference>
<dbReference type="Pfam" id="PF13378">
    <property type="entry name" value="MR_MLE_C"/>
    <property type="match status" value="1"/>
</dbReference>
<dbReference type="Pfam" id="PF02746">
    <property type="entry name" value="MR_MLE_N"/>
    <property type="match status" value="1"/>
</dbReference>
<dbReference type="SFLD" id="SFLDS00001">
    <property type="entry name" value="Enolase"/>
    <property type="match status" value="1"/>
</dbReference>
<dbReference type="SFLD" id="SFLDF00006">
    <property type="entry name" value="rhamnonate_dehydratase"/>
    <property type="match status" value="1"/>
</dbReference>
<dbReference type="SMART" id="SM00922">
    <property type="entry name" value="MR_MLE"/>
    <property type="match status" value="1"/>
</dbReference>
<dbReference type="SUPFAM" id="SSF51604">
    <property type="entry name" value="Enolase C-terminal domain-like"/>
    <property type="match status" value="1"/>
</dbReference>
<dbReference type="SUPFAM" id="SSF54826">
    <property type="entry name" value="Enolase N-terminal domain-like"/>
    <property type="match status" value="1"/>
</dbReference>
<dbReference type="PROSITE" id="PS00908">
    <property type="entry name" value="MR_MLE_1"/>
    <property type="match status" value="1"/>
</dbReference>
<reference key="1">
    <citation type="journal article" date="2009" name="PLoS Genet.">
        <title>Organised genome dynamics in the Escherichia coli species results in highly diverse adaptive paths.</title>
        <authorList>
            <person name="Touchon M."/>
            <person name="Hoede C."/>
            <person name="Tenaillon O."/>
            <person name="Barbe V."/>
            <person name="Baeriswyl S."/>
            <person name="Bidet P."/>
            <person name="Bingen E."/>
            <person name="Bonacorsi S."/>
            <person name="Bouchier C."/>
            <person name="Bouvet O."/>
            <person name="Calteau A."/>
            <person name="Chiapello H."/>
            <person name="Clermont O."/>
            <person name="Cruveiller S."/>
            <person name="Danchin A."/>
            <person name="Diard M."/>
            <person name="Dossat C."/>
            <person name="Karoui M.E."/>
            <person name="Frapy E."/>
            <person name="Garry L."/>
            <person name="Ghigo J.M."/>
            <person name="Gilles A.M."/>
            <person name="Johnson J."/>
            <person name="Le Bouguenec C."/>
            <person name="Lescat M."/>
            <person name="Mangenot S."/>
            <person name="Martinez-Jehanne V."/>
            <person name="Matic I."/>
            <person name="Nassif X."/>
            <person name="Oztas S."/>
            <person name="Petit M.A."/>
            <person name="Pichon C."/>
            <person name="Rouy Z."/>
            <person name="Ruf C.S."/>
            <person name="Schneider D."/>
            <person name="Tourret J."/>
            <person name="Vacherie B."/>
            <person name="Vallenet D."/>
            <person name="Medigue C."/>
            <person name="Rocha E.P.C."/>
            <person name="Denamur E."/>
        </authorList>
    </citation>
    <scope>NUCLEOTIDE SEQUENCE [LARGE SCALE GENOMIC DNA]</scope>
    <source>
        <strain>S88 / ExPEC</strain>
    </source>
</reference>